<proteinExistence type="evidence at protein level"/>
<sequence length="594" mass="65326">MNKIKGGRHKSPVKLFEVRLYNAEANVIVLYGNSMDTSARLSGIVVLSVSSPIRVKNIKLRLSGRSFVCWADESRHASPGNRIRRQVVQILDKSWSFLAPNESAKVIDQGNYEYPFYYELPPDIPDSIEGIPGCHIIYTLTASLERATQPPTNLETALQFRVIRTIPPNSLDLMHSVSVSDIWPLKVNYETSIPSKVYAIGSEIPVNITLYPLLKGLDVGKVTLVLKEYCTLFITSKAYSSTCRKEFKRALVKKTIPGLPMVDDYWQDQIMVKIPDSLGECTQDCDLNCIRVHHKLRLSISLLNPDGHVSELRNSLPLSLVISPVMFGARPTEGVFTGDHNSYVNENILPSYDKHVFDVLWDGIPSENPQLQSGFTTPNLSRRNSSDFGPNSPVNIHSNPVPISGQQPSSPASNSNANFFFGSSPQSMSSEQTDMMSPITSPLAPFSGVTRRAARTRANSASSVFNSQLQPLQTDLLSPLPSPTSSNSRLPRVRSACTLNVQELSKIPPYYEAHSAFTNVLPLDGLPRYEEATRPSSPTESVEIPSNTTTIAPSPVPTIIAPALPSTPAPPLPSHPMATRKSLSSTNLVRRGVR</sequence>
<reference key="1">
    <citation type="journal article" date="2002" name="Nature">
        <title>The genome sequence of Schizosaccharomyces pombe.</title>
        <authorList>
            <person name="Wood V."/>
            <person name="Gwilliam R."/>
            <person name="Rajandream M.A."/>
            <person name="Lyne M.H."/>
            <person name="Lyne R."/>
            <person name="Stewart A."/>
            <person name="Sgouros J.G."/>
            <person name="Peat N."/>
            <person name="Hayles J."/>
            <person name="Baker S.G."/>
            <person name="Basham D."/>
            <person name="Bowman S."/>
            <person name="Brooks K."/>
            <person name="Brown D."/>
            <person name="Brown S."/>
            <person name="Chillingworth T."/>
            <person name="Churcher C.M."/>
            <person name="Collins M."/>
            <person name="Connor R."/>
            <person name="Cronin A."/>
            <person name="Davis P."/>
            <person name="Feltwell T."/>
            <person name="Fraser A."/>
            <person name="Gentles S."/>
            <person name="Goble A."/>
            <person name="Hamlin N."/>
            <person name="Harris D.E."/>
            <person name="Hidalgo J."/>
            <person name="Hodgson G."/>
            <person name="Holroyd S."/>
            <person name="Hornsby T."/>
            <person name="Howarth S."/>
            <person name="Huckle E.J."/>
            <person name="Hunt S."/>
            <person name="Jagels K."/>
            <person name="James K.D."/>
            <person name="Jones L."/>
            <person name="Jones M."/>
            <person name="Leather S."/>
            <person name="McDonald S."/>
            <person name="McLean J."/>
            <person name="Mooney P."/>
            <person name="Moule S."/>
            <person name="Mungall K.L."/>
            <person name="Murphy L.D."/>
            <person name="Niblett D."/>
            <person name="Odell C."/>
            <person name="Oliver K."/>
            <person name="O'Neil S."/>
            <person name="Pearson D."/>
            <person name="Quail M.A."/>
            <person name="Rabbinowitsch E."/>
            <person name="Rutherford K.M."/>
            <person name="Rutter S."/>
            <person name="Saunders D."/>
            <person name="Seeger K."/>
            <person name="Sharp S."/>
            <person name="Skelton J."/>
            <person name="Simmonds M.N."/>
            <person name="Squares R."/>
            <person name="Squares S."/>
            <person name="Stevens K."/>
            <person name="Taylor K."/>
            <person name="Taylor R.G."/>
            <person name="Tivey A."/>
            <person name="Walsh S.V."/>
            <person name="Warren T."/>
            <person name="Whitehead S."/>
            <person name="Woodward J.R."/>
            <person name="Volckaert G."/>
            <person name="Aert R."/>
            <person name="Robben J."/>
            <person name="Grymonprez B."/>
            <person name="Weltjens I."/>
            <person name="Vanstreels E."/>
            <person name="Rieger M."/>
            <person name="Schaefer M."/>
            <person name="Mueller-Auer S."/>
            <person name="Gabel C."/>
            <person name="Fuchs M."/>
            <person name="Duesterhoeft A."/>
            <person name="Fritzc C."/>
            <person name="Holzer E."/>
            <person name="Moestl D."/>
            <person name="Hilbert H."/>
            <person name="Borzym K."/>
            <person name="Langer I."/>
            <person name="Beck A."/>
            <person name="Lehrach H."/>
            <person name="Reinhardt R."/>
            <person name="Pohl T.M."/>
            <person name="Eger P."/>
            <person name="Zimmermann W."/>
            <person name="Wedler H."/>
            <person name="Wambutt R."/>
            <person name="Purnelle B."/>
            <person name="Goffeau A."/>
            <person name="Cadieu E."/>
            <person name="Dreano S."/>
            <person name="Gloux S."/>
            <person name="Lelaure V."/>
            <person name="Mottier S."/>
            <person name="Galibert F."/>
            <person name="Aves S.J."/>
            <person name="Xiang Z."/>
            <person name="Hunt C."/>
            <person name="Moore K."/>
            <person name="Hurst S.M."/>
            <person name="Lucas M."/>
            <person name="Rochet M."/>
            <person name="Gaillardin C."/>
            <person name="Tallada V.A."/>
            <person name="Garzon A."/>
            <person name="Thode G."/>
            <person name="Daga R.R."/>
            <person name="Cruzado L."/>
            <person name="Jimenez J."/>
            <person name="Sanchez M."/>
            <person name="del Rey F."/>
            <person name="Benito J."/>
            <person name="Dominguez A."/>
            <person name="Revuelta J.L."/>
            <person name="Moreno S."/>
            <person name="Armstrong J."/>
            <person name="Forsburg S.L."/>
            <person name="Cerutti L."/>
            <person name="Lowe T."/>
            <person name="McCombie W.R."/>
            <person name="Paulsen I."/>
            <person name="Potashkin J."/>
            <person name="Shpakovski G.V."/>
            <person name="Ussery D."/>
            <person name="Barrell B.G."/>
            <person name="Nurse P."/>
        </authorList>
    </citation>
    <scope>NUCLEOTIDE SEQUENCE [LARGE SCALE GENOMIC DNA]</scope>
    <source>
        <strain>972 / ATCC 24843</strain>
    </source>
</reference>
<reference key="2">
    <citation type="journal article" date="2000" name="Genes Cells">
        <title>Large-scale screening of intracellular protein localization in living fission yeast cells by the use of a GFP-fusion genomic DNA library.</title>
        <authorList>
            <person name="Ding D.-Q."/>
            <person name="Tomita Y."/>
            <person name="Yamamoto A."/>
            <person name="Chikashige Y."/>
            <person name="Haraguchi T."/>
            <person name="Hiraoka Y."/>
        </authorList>
    </citation>
    <scope>NUCLEOTIDE SEQUENCE [LARGE SCALE GENOMIC DNA] OF 267-339</scope>
    <source>
        <strain>ATCC 38364 / 968</strain>
    </source>
</reference>
<reference key="3">
    <citation type="journal article" date="2008" name="J. Proteome Res.">
        <title>Phosphoproteome analysis of fission yeast.</title>
        <authorList>
            <person name="Wilson-Grady J.T."/>
            <person name="Villen J."/>
            <person name="Gygi S.P."/>
        </authorList>
    </citation>
    <scope>PHOSPHORYLATION [LARGE SCALE ANALYSIS] AT SER-584</scope>
    <scope>IDENTIFICATION BY MASS SPECTROMETRY</scope>
</reference>
<keyword id="KW-0597">Phosphoprotein</keyword>
<keyword id="KW-1185">Reference proteome</keyword>
<comment type="similarity">
    <text evidence="3">Belongs to the arrestin family.</text>
</comment>
<protein>
    <recommendedName>
        <fullName>Arrestin domain-containing protein C584.15c</fullName>
    </recommendedName>
</protein>
<organism>
    <name type="scientific">Schizosaccharomyces pombe (strain 972 / ATCC 24843)</name>
    <name type="common">Fission yeast</name>
    <dbReference type="NCBI Taxonomy" id="284812"/>
    <lineage>
        <taxon>Eukaryota</taxon>
        <taxon>Fungi</taxon>
        <taxon>Dikarya</taxon>
        <taxon>Ascomycota</taxon>
        <taxon>Taphrinomycotina</taxon>
        <taxon>Schizosaccharomycetes</taxon>
        <taxon>Schizosaccharomycetales</taxon>
        <taxon>Schizosaccharomycetaceae</taxon>
        <taxon>Schizosaccharomyces</taxon>
    </lineage>
</organism>
<dbReference type="EMBL" id="CU329672">
    <property type="protein sequence ID" value="CAB37428.1"/>
    <property type="molecule type" value="Genomic_DNA"/>
</dbReference>
<dbReference type="EMBL" id="AB027970">
    <property type="protein sequence ID" value="BAA87274.1"/>
    <property type="molecule type" value="Genomic_DNA"/>
</dbReference>
<dbReference type="PIR" id="T39135">
    <property type="entry name" value="S62529"/>
</dbReference>
<dbReference type="SMR" id="Q09889"/>
<dbReference type="BioGRID" id="275852">
    <property type="interactions" value="23"/>
</dbReference>
<dbReference type="FunCoup" id="Q09889">
    <property type="interactions" value="26"/>
</dbReference>
<dbReference type="STRING" id="284812.Q09889"/>
<dbReference type="iPTMnet" id="Q09889"/>
<dbReference type="PaxDb" id="4896-SPCC584.15c.1"/>
<dbReference type="EnsemblFungi" id="SPCC584.15c.1">
    <property type="protein sequence ID" value="SPCC584.15c.1:pep"/>
    <property type="gene ID" value="SPCC584.15c"/>
</dbReference>
<dbReference type="KEGG" id="spo:2539284"/>
<dbReference type="PomBase" id="SPCC584.15c"/>
<dbReference type="VEuPathDB" id="FungiDB:SPCC584.15c"/>
<dbReference type="eggNOG" id="KOG3780">
    <property type="taxonomic scope" value="Eukaryota"/>
</dbReference>
<dbReference type="HOGENOM" id="CLU_018982_2_0_1"/>
<dbReference type="InParanoid" id="Q09889"/>
<dbReference type="OMA" id="DCDLNCI"/>
<dbReference type="PhylomeDB" id="Q09889"/>
<dbReference type="Reactome" id="R-SPO-844456">
    <property type="pathway name" value="The NLRP3 inflammasome"/>
</dbReference>
<dbReference type="PRO" id="PR:Q09889"/>
<dbReference type="Proteomes" id="UP000002485">
    <property type="component" value="Chromosome III"/>
</dbReference>
<dbReference type="GO" id="GO:0032153">
    <property type="term" value="C:cell division site"/>
    <property type="evidence" value="ECO:0007005"/>
    <property type="project" value="PomBase"/>
</dbReference>
<dbReference type="GO" id="GO:0005737">
    <property type="term" value="C:cytoplasm"/>
    <property type="evidence" value="ECO:0000318"/>
    <property type="project" value="GO_Central"/>
</dbReference>
<dbReference type="GO" id="GO:0005829">
    <property type="term" value="C:cytosol"/>
    <property type="evidence" value="ECO:0007005"/>
    <property type="project" value="PomBase"/>
</dbReference>
<dbReference type="GO" id="GO:0005886">
    <property type="term" value="C:plasma membrane"/>
    <property type="evidence" value="ECO:0000318"/>
    <property type="project" value="GO_Central"/>
</dbReference>
<dbReference type="GO" id="GO:0005509">
    <property type="term" value="F:calcium ion binding"/>
    <property type="evidence" value="ECO:0000255"/>
    <property type="project" value="PomBase"/>
</dbReference>
<dbReference type="GO" id="GO:0030674">
    <property type="term" value="F:protein-macromolecule adaptor activity"/>
    <property type="evidence" value="ECO:0000316"/>
    <property type="project" value="PomBase"/>
</dbReference>
<dbReference type="GO" id="GO:0031625">
    <property type="term" value="F:ubiquitin protein ligase binding"/>
    <property type="evidence" value="ECO:0000318"/>
    <property type="project" value="GO_Central"/>
</dbReference>
<dbReference type="GO" id="GO:0072583">
    <property type="term" value="P:clathrin-dependent endocytosis"/>
    <property type="evidence" value="ECO:0000266"/>
    <property type="project" value="PomBase"/>
</dbReference>
<dbReference type="GO" id="GO:0006897">
    <property type="term" value="P:endocytosis"/>
    <property type="evidence" value="ECO:0000315"/>
    <property type="project" value="PomBase"/>
</dbReference>
<dbReference type="GO" id="GO:0032509">
    <property type="term" value="P:endosome transport via multivesicular body sorting pathway"/>
    <property type="evidence" value="ECO:0000315"/>
    <property type="project" value="PomBase"/>
</dbReference>
<dbReference type="GO" id="GO:0070086">
    <property type="term" value="P:ubiquitin-dependent endocytosis"/>
    <property type="evidence" value="ECO:0000318"/>
    <property type="project" value="GO_Central"/>
</dbReference>
<dbReference type="Gene3D" id="2.60.40.640">
    <property type="match status" value="1"/>
</dbReference>
<dbReference type="InterPro" id="IPR014752">
    <property type="entry name" value="Arrestin-like_C"/>
</dbReference>
<dbReference type="InterPro" id="IPR011021">
    <property type="entry name" value="Arrestin-like_N"/>
</dbReference>
<dbReference type="InterPro" id="IPR011022">
    <property type="entry name" value="Arrestin_C-like"/>
</dbReference>
<dbReference type="InterPro" id="IPR050357">
    <property type="entry name" value="Arrestin_domain-protein"/>
</dbReference>
<dbReference type="InterPro" id="IPR014756">
    <property type="entry name" value="Ig_E-set"/>
</dbReference>
<dbReference type="PANTHER" id="PTHR11188">
    <property type="entry name" value="ARRESTIN DOMAIN CONTAINING PROTEIN"/>
    <property type="match status" value="1"/>
</dbReference>
<dbReference type="PANTHER" id="PTHR11188:SF17">
    <property type="entry name" value="FI21816P1"/>
    <property type="match status" value="1"/>
</dbReference>
<dbReference type="Pfam" id="PF02752">
    <property type="entry name" value="Arrestin_C"/>
    <property type="match status" value="1"/>
</dbReference>
<dbReference type="Pfam" id="PF00339">
    <property type="entry name" value="Arrestin_N"/>
    <property type="match status" value="1"/>
</dbReference>
<dbReference type="SMART" id="SM01017">
    <property type="entry name" value="Arrestin_C"/>
    <property type="match status" value="1"/>
</dbReference>
<dbReference type="SUPFAM" id="SSF81296">
    <property type="entry name" value="E set domains"/>
    <property type="match status" value="1"/>
</dbReference>
<evidence type="ECO:0000256" key="1">
    <source>
        <dbReference type="SAM" id="MobiDB-lite"/>
    </source>
</evidence>
<evidence type="ECO:0000269" key="2">
    <source>
    </source>
</evidence>
<evidence type="ECO:0000305" key="3"/>
<feature type="chain" id="PRO_0000116541" description="Arrestin domain-containing protein C584.15c">
    <location>
        <begin position="1"/>
        <end position="594"/>
    </location>
</feature>
<feature type="region of interest" description="Disordered" evidence="1">
    <location>
        <begin position="368"/>
        <end position="417"/>
    </location>
</feature>
<feature type="region of interest" description="Disordered" evidence="1">
    <location>
        <begin position="531"/>
        <end position="594"/>
    </location>
</feature>
<feature type="compositionally biased region" description="Polar residues" evidence="1">
    <location>
        <begin position="368"/>
        <end position="398"/>
    </location>
</feature>
<feature type="compositionally biased region" description="Low complexity" evidence="1">
    <location>
        <begin position="404"/>
        <end position="417"/>
    </location>
</feature>
<feature type="compositionally biased region" description="Polar residues" evidence="1">
    <location>
        <begin position="534"/>
        <end position="552"/>
    </location>
</feature>
<feature type="compositionally biased region" description="Pro residues" evidence="1">
    <location>
        <begin position="565"/>
        <end position="574"/>
    </location>
</feature>
<feature type="modified residue" description="Phosphoserine" evidence="2">
    <location>
        <position position="584"/>
    </location>
</feature>
<accession>Q09889</accession>
<accession>Q9US87</accession>
<gene>
    <name type="ORF">SPCC584.15c</name>
</gene>
<name>YC9F_SCHPO</name>